<feature type="transit peptide" description="Mitochondrion" evidence="4">
    <location>
        <begin position="1"/>
        <end position="62"/>
    </location>
</feature>
<feature type="chain" id="PRO_0000030334" description="Peptide chain release factor 1, mitochondrial">
    <location>
        <begin position="63"/>
        <end position="446"/>
    </location>
</feature>
<feature type="region of interest" description="GGQ domain" evidence="2">
    <location>
        <begin position="298"/>
        <end position="362"/>
    </location>
</feature>
<feature type="short sequence motif" description="GGQ" evidence="1">
    <location>
        <begin position="312"/>
        <end position="314"/>
    </location>
</feature>
<feature type="modified residue" description="N5-methylglutamine" evidence="1">
    <location>
        <position position="314"/>
    </location>
</feature>
<organism>
    <name type="scientific">Mus musculus</name>
    <name type="common">Mouse</name>
    <dbReference type="NCBI Taxonomy" id="10090"/>
    <lineage>
        <taxon>Eukaryota</taxon>
        <taxon>Metazoa</taxon>
        <taxon>Chordata</taxon>
        <taxon>Craniata</taxon>
        <taxon>Vertebrata</taxon>
        <taxon>Euteleostomi</taxon>
        <taxon>Mammalia</taxon>
        <taxon>Eutheria</taxon>
        <taxon>Euarchontoglires</taxon>
        <taxon>Glires</taxon>
        <taxon>Rodentia</taxon>
        <taxon>Myomorpha</taxon>
        <taxon>Muroidea</taxon>
        <taxon>Muridae</taxon>
        <taxon>Murinae</taxon>
        <taxon>Mus</taxon>
        <taxon>Mus</taxon>
    </lineage>
</organism>
<gene>
    <name evidence="6" type="primary">Mtrf1</name>
</gene>
<accession>Q8K126</accession>
<dbReference type="EMBL" id="AK043981">
    <property type="protein sequence ID" value="BAC31724.1"/>
    <property type="molecule type" value="mRNA"/>
</dbReference>
<dbReference type="EMBL" id="BC028898">
    <property type="protein sequence ID" value="AAH28898.1"/>
    <property type="molecule type" value="mRNA"/>
</dbReference>
<dbReference type="CCDS" id="CCDS27297.1"/>
<dbReference type="RefSeq" id="NP_666072.3">
    <property type="nucleotide sequence ID" value="NM_145960.4"/>
</dbReference>
<dbReference type="SMR" id="Q8K126"/>
<dbReference type="BioGRID" id="229217">
    <property type="interactions" value="1"/>
</dbReference>
<dbReference type="FunCoup" id="Q8K126">
    <property type="interactions" value="1881"/>
</dbReference>
<dbReference type="IntAct" id="Q8K126">
    <property type="interactions" value="1"/>
</dbReference>
<dbReference type="STRING" id="10090.ENSMUSP00000022600"/>
<dbReference type="iPTMnet" id="Q8K126"/>
<dbReference type="PhosphoSitePlus" id="Q8K126"/>
<dbReference type="PaxDb" id="10090-ENSMUSP00000022600"/>
<dbReference type="ProteomicsDB" id="254918"/>
<dbReference type="Antibodypedia" id="23394">
    <property type="antibodies" value="163 antibodies from 21 providers"/>
</dbReference>
<dbReference type="Ensembl" id="ENSMUST00000022600.4">
    <property type="protein sequence ID" value="ENSMUSP00000022600.3"/>
    <property type="gene ID" value="ENSMUSG00000022022.4"/>
</dbReference>
<dbReference type="GeneID" id="211253"/>
<dbReference type="KEGG" id="mmu:211253"/>
<dbReference type="UCSC" id="uc007usw.1">
    <property type="organism name" value="mouse"/>
</dbReference>
<dbReference type="AGR" id="MGI:2384815"/>
<dbReference type="CTD" id="9617"/>
<dbReference type="MGI" id="MGI:2384815">
    <property type="gene designation" value="Mtrf1"/>
</dbReference>
<dbReference type="VEuPathDB" id="HostDB:ENSMUSG00000022022"/>
<dbReference type="eggNOG" id="KOG2726">
    <property type="taxonomic scope" value="Eukaryota"/>
</dbReference>
<dbReference type="GeneTree" id="ENSGT00940000156877"/>
<dbReference type="HOGENOM" id="CLU_036856_0_3_1"/>
<dbReference type="InParanoid" id="Q8K126"/>
<dbReference type="OMA" id="ECQQSRS"/>
<dbReference type="OrthoDB" id="2019491at2759"/>
<dbReference type="PhylomeDB" id="Q8K126"/>
<dbReference type="TreeFam" id="TF313720"/>
<dbReference type="BioGRID-ORCS" id="211253">
    <property type="hits" value="1 hit in 76 CRISPR screens"/>
</dbReference>
<dbReference type="PRO" id="PR:Q8K126"/>
<dbReference type="Proteomes" id="UP000000589">
    <property type="component" value="Chromosome 14"/>
</dbReference>
<dbReference type="RNAct" id="Q8K126">
    <property type="molecule type" value="protein"/>
</dbReference>
<dbReference type="Bgee" id="ENSMUSG00000022022">
    <property type="expression patterns" value="Expressed in heart left ventricle and 68 other cell types or tissues"/>
</dbReference>
<dbReference type="GO" id="GO:0005739">
    <property type="term" value="C:mitochondrion"/>
    <property type="evidence" value="ECO:0007005"/>
    <property type="project" value="MGI"/>
</dbReference>
<dbReference type="GO" id="GO:0016149">
    <property type="term" value="F:translation release factor activity, codon specific"/>
    <property type="evidence" value="ECO:0000250"/>
    <property type="project" value="UniProtKB"/>
</dbReference>
<dbReference type="GO" id="GO:0070126">
    <property type="term" value="P:mitochondrial translational termination"/>
    <property type="evidence" value="ECO:0000250"/>
    <property type="project" value="UniProtKB"/>
</dbReference>
<dbReference type="FunFam" id="3.30.160.20:FF:000004">
    <property type="entry name" value="Peptide chain release factor 1"/>
    <property type="match status" value="1"/>
</dbReference>
<dbReference type="FunFam" id="3.30.70.1660:FF:000004">
    <property type="entry name" value="Peptide chain release factor 1"/>
    <property type="match status" value="1"/>
</dbReference>
<dbReference type="Gene3D" id="3.30.160.20">
    <property type="match status" value="1"/>
</dbReference>
<dbReference type="Gene3D" id="3.30.70.1660">
    <property type="match status" value="1"/>
</dbReference>
<dbReference type="Gene3D" id="6.10.140.1950">
    <property type="match status" value="1"/>
</dbReference>
<dbReference type="InterPro" id="IPR005139">
    <property type="entry name" value="PCRF"/>
</dbReference>
<dbReference type="InterPro" id="IPR000352">
    <property type="entry name" value="Pep_chain_release_fac_I"/>
</dbReference>
<dbReference type="InterPro" id="IPR045853">
    <property type="entry name" value="Pep_chain_release_fac_I_sf"/>
</dbReference>
<dbReference type="InterPro" id="IPR050057">
    <property type="entry name" value="Prokaryotic/Mito_RF"/>
</dbReference>
<dbReference type="PANTHER" id="PTHR43804">
    <property type="entry name" value="LD18447P"/>
    <property type="match status" value="1"/>
</dbReference>
<dbReference type="PANTHER" id="PTHR43804:SF1">
    <property type="entry name" value="PEPTIDE CHAIN RELEASE FACTOR 1, MITOCHONDRIAL"/>
    <property type="match status" value="1"/>
</dbReference>
<dbReference type="Pfam" id="PF03462">
    <property type="entry name" value="PCRF"/>
    <property type="match status" value="1"/>
</dbReference>
<dbReference type="Pfam" id="PF00472">
    <property type="entry name" value="RF-1"/>
    <property type="match status" value="1"/>
</dbReference>
<dbReference type="SMART" id="SM00937">
    <property type="entry name" value="PCRF"/>
    <property type="match status" value="1"/>
</dbReference>
<dbReference type="SUPFAM" id="SSF75620">
    <property type="entry name" value="Release factor"/>
    <property type="match status" value="1"/>
</dbReference>
<dbReference type="PROSITE" id="PS00745">
    <property type="entry name" value="RF_PROK_I"/>
    <property type="match status" value="1"/>
</dbReference>
<evidence type="ECO:0000250" key="1">
    <source>
        <dbReference type="UniProtKB" id="O75570"/>
    </source>
</evidence>
<evidence type="ECO:0000250" key="2">
    <source>
        <dbReference type="UniProtKB" id="Q80VP5"/>
    </source>
</evidence>
<evidence type="ECO:0000250" key="3">
    <source>
        <dbReference type="UniProtKB" id="Q9H3J6"/>
    </source>
</evidence>
<evidence type="ECO:0000255" key="4"/>
<evidence type="ECO:0000305" key="5"/>
<evidence type="ECO:0000312" key="6">
    <source>
        <dbReference type="MGI" id="MGI:2384815"/>
    </source>
</evidence>
<proteinExistence type="evidence at transcript level"/>
<reference key="1">
    <citation type="journal article" date="2005" name="Science">
        <title>The transcriptional landscape of the mammalian genome.</title>
        <authorList>
            <person name="Carninci P."/>
            <person name="Kasukawa T."/>
            <person name="Katayama S."/>
            <person name="Gough J."/>
            <person name="Frith M.C."/>
            <person name="Maeda N."/>
            <person name="Oyama R."/>
            <person name="Ravasi T."/>
            <person name="Lenhard B."/>
            <person name="Wells C."/>
            <person name="Kodzius R."/>
            <person name="Shimokawa K."/>
            <person name="Bajic V.B."/>
            <person name="Brenner S.E."/>
            <person name="Batalov S."/>
            <person name="Forrest A.R."/>
            <person name="Zavolan M."/>
            <person name="Davis M.J."/>
            <person name="Wilming L.G."/>
            <person name="Aidinis V."/>
            <person name="Allen J.E."/>
            <person name="Ambesi-Impiombato A."/>
            <person name="Apweiler R."/>
            <person name="Aturaliya R.N."/>
            <person name="Bailey T.L."/>
            <person name="Bansal M."/>
            <person name="Baxter L."/>
            <person name="Beisel K.W."/>
            <person name="Bersano T."/>
            <person name="Bono H."/>
            <person name="Chalk A.M."/>
            <person name="Chiu K.P."/>
            <person name="Choudhary V."/>
            <person name="Christoffels A."/>
            <person name="Clutterbuck D.R."/>
            <person name="Crowe M.L."/>
            <person name="Dalla E."/>
            <person name="Dalrymple B.P."/>
            <person name="de Bono B."/>
            <person name="Della Gatta G."/>
            <person name="di Bernardo D."/>
            <person name="Down T."/>
            <person name="Engstrom P."/>
            <person name="Fagiolini M."/>
            <person name="Faulkner G."/>
            <person name="Fletcher C.F."/>
            <person name="Fukushima T."/>
            <person name="Furuno M."/>
            <person name="Futaki S."/>
            <person name="Gariboldi M."/>
            <person name="Georgii-Hemming P."/>
            <person name="Gingeras T.R."/>
            <person name="Gojobori T."/>
            <person name="Green R.E."/>
            <person name="Gustincich S."/>
            <person name="Harbers M."/>
            <person name="Hayashi Y."/>
            <person name="Hensch T.K."/>
            <person name="Hirokawa N."/>
            <person name="Hill D."/>
            <person name="Huminiecki L."/>
            <person name="Iacono M."/>
            <person name="Ikeo K."/>
            <person name="Iwama A."/>
            <person name="Ishikawa T."/>
            <person name="Jakt M."/>
            <person name="Kanapin A."/>
            <person name="Katoh M."/>
            <person name="Kawasawa Y."/>
            <person name="Kelso J."/>
            <person name="Kitamura H."/>
            <person name="Kitano H."/>
            <person name="Kollias G."/>
            <person name="Krishnan S.P."/>
            <person name="Kruger A."/>
            <person name="Kummerfeld S.K."/>
            <person name="Kurochkin I.V."/>
            <person name="Lareau L.F."/>
            <person name="Lazarevic D."/>
            <person name="Lipovich L."/>
            <person name="Liu J."/>
            <person name="Liuni S."/>
            <person name="McWilliam S."/>
            <person name="Madan Babu M."/>
            <person name="Madera M."/>
            <person name="Marchionni L."/>
            <person name="Matsuda H."/>
            <person name="Matsuzawa S."/>
            <person name="Miki H."/>
            <person name="Mignone F."/>
            <person name="Miyake S."/>
            <person name="Morris K."/>
            <person name="Mottagui-Tabar S."/>
            <person name="Mulder N."/>
            <person name="Nakano N."/>
            <person name="Nakauchi H."/>
            <person name="Ng P."/>
            <person name="Nilsson R."/>
            <person name="Nishiguchi S."/>
            <person name="Nishikawa S."/>
            <person name="Nori F."/>
            <person name="Ohara O."/>
            <person name="Okazaki Y."/>
            <person name="Orlando V."/>
            <person name="Pang K.C."/>
            <person name="Pavan W.J."/>
            <person name="Pavesi G."/>
            <person name="Pesole G."/>
            <person name="Petrovsky N."/>
            <person name="Piazza S."/>
            <person name="Reed J."/>
            <person name="Reid J.F."/>
            <person name="Ring B.Z."/>
            <person name="Ringwald M."/>
            <person name="Rost B."/>
            <person name="Ruan Y."/>
            <person name="Salzberg S.L."/>
            <person name="Sandelin A."/>
            <person name="Schneider C."/>
            <person name="Schoenbach C."/>
            <person name="Sekiguchi K."/>
            <person name="Semple C.A."/>
            <person name="Seno S."/>
            <person name="Sessa L."/>
            <person name="Sheng Y."/>
            <person name="Shibata Y."/>
            <person name="Shimada H."/>
            <person name="Shimada K."/>
            <person name="Silva D."/>
            <person name="Sinclair B."/>
            <person name="Sperling S."/>
            <person name="Stupka E."/>
            <person name="Sugiura K."/>
            <person name="Sultana R."/>
            <person name="Takenaka Y."/>
            <person name="Taki K."/>
            <person name="Tammoja K."/>
            <person name="Tan S.L."/>
            <person name="Tang S."/>
            <person name="Taylor M.S."/>
            <person name="Tegner J."/>
            <person name="Teichmann S.A."/>
            <person name="Ueda H.R."/>
            <person name="van Nimwegen E."/>
            <person name="Verardo R."/>
            <person name="Wei C.L."/>
            <person name="Yagi K."/>
            <person name="Yamanishi H."/>
            <person name="Zabarovsky E."/>
            <person name="Zhu S."/>
            <person name="Zimmer A."/>
            <person name="Hide W."/>
            <person name="Bult C."/>
            <person name="Grimmond S.M."/>
            <person name="Teasdale R.D."/>
            <person name="Liu E.T."/>
            <person name="Brusic V."/>
            <person name="Quackenbush J."/>
            <person name="Wahlestedt C."/>
            <person name="Mattick J.S."/>
            <person name="Hume D.A."/>
            <person name="Kai C."/>
            <person name="Sasaki D."/>
            <person name="Tomaru Y."/>
            <person name="Fukuda S."/>
            <person name="Kanamori-Katayama M."/>
            <person name="Suzuki M."/>
            <person name="Aoki J."/>
            <person name="Arakawa T."/>
            <person name="Iida J."/>
            <person name="Imamura K."/>
            <person name="Itoh M."/>
            <person name="Kato T."/>
            <person name="Kawaji H."/>
            <person name="Kawagashira N."/>
            <person name="Kawashima T."/>
            <person name="Kojima M."/>
            <person name="Kondo S."/>
            <person name="Konno H."/>
            <person name="Nakano K."/>
            <person name="Ninomiya N."/>
            <person name="Nishio T."/>
            <person name="Okada M."/>
            <person name="Plessy C."/>
            <person name="Shibata K."/>
            <person name="Shiraki T."/>
            <person name="Suzuki S."/>
            <person name="Tagami M."/>
            <person name="Waki K."/>
            <person name="Watahiki A."/>
            <person name="Okamura-Oho Y."/>
            <person name="Suzuki H."/>
            <person name="Kawai J."/>
            <person name="Hayashizaki Y."/>
        </authorList>
    </citation>
    <scope>NUCLEOTIDE SEQUENCE [LARGE SCALE MRNA]</scope>
    <source>
        <strain>C57BL/6J</strain>
        <tissue>Brain cortex</tissue>
    </source>
</reference>
<reference key="2">
    <citation type="journal article" date="2004" name="Genome Res.">
        <title>The status, quality, and expansion of the NIH full-length cDNA project: the Mammalian Gene Collection (MGC).</title>
        <authorList>
            <consortium name="The MGC Project Team"/>
        </authorList>
    </citation>
    <scope>NUCLEOTIDE SEQUENCE [LARGE SCALE MRNA]</scope>
    <source>
        <tissue>Colon</tissue>
    </source>
</reference>
<sequence>MSHHLCIWLFRNPFLRACPQRHVFLSCQQFRQISLDTRPWNFRQKKTHVLYQLLNKSWSRGCCHQGTRKLWKHKALQKYMEDLNKEYQTLDQCLQGISENEGDRRALHRRHAQLAPLAAVYQEIQEAEQAIEELESLCKSLNKQDEKQLQELVSEERQIIDQKIHRLYSELLERLVPKEKYDWSDVILEVTSGRTTGGDICQQFTREIFDMYQNYSYYKHWKFELLNYTPADYGGLHHAAARISGDSVYKHLKYEGGIHRVQRIPEVGLSSRMQRIHTGTMSVIVLPQPDEVDVKVDPKDLRVDTFRARGAGGQHVNTTDSAVRLVHIPTGLVVECQQERSQLKNKEIALRVLRARLYQQIIEKDRCQQQNARKLQVGTRAQSERIRTYNFTQDRVTDHRIAYEVRDIKEFLRGEKCLDQLIERLLQSADEEAISEFLDESLQSVK</sequence>
<name>RF1M_MOUSE</name>
<comment type="function">
    <text evidence="1">Mitochondrial peptide chain release factor that directs the termination of translation in response to the peptide chain non-canonical stop codons AGG and AGA. Non-canonical termination codons AGG and AGA are found at the end of MT-CO1/COX1 and MT-ND6/ND6 open reading frames, respectively. Recognizes non-canonical stop codons via a network of interactions between the codon, MTRF1 and the ribosomal RNA (rRNA): in contrast to other translation release factors, which identify the codon in the A-site via direct interactions of amino acid side chains with the bases, MTRF1 repositions the first 2 bases of the stop codon to use an intricate network of interactions that includes residues of the release factor, the rRNA of the small ribosomal subunit, as well as neighboring bases of the mRNA.</text>
</comment>
<comment type="subcellular location">
    <subcellularLocation>
        <location evidence="1">Mitochondrion</location>
    </subcellularLocation>
</comment>
<comment type="domain">
    <text evidence="3">The GGQ domain interacts with the peptidyltransferase center (PTC) of the large ribosomal subunit to trigger nascent chain hydrolysis.</text>
</comment>
<comment type="PTM">
    <text evidence="1">Methylation of glutamine in the GGQ triplet by HEMK1 is conserved from bacteria to mammals.</text>
</comment>
<comment type="similarity">
    <text evidence="5">Belongs to the prokaryotic/mitochondrial release factor family.</text>
</comment>
<keyword id="KW-0488">Methylation</keyword>
<keyword id="KW-0496">Mitochondrion</keyword>
<keyword id="KW-0648">Protein biosynthesis</keyword>
<keyword id="KW-1185">Reference proteome</keyword>
<keyword id="KW-0809">Transit peptide</keyword>
<protein>
    <recommendedName>
        <fullName>Peptide chain release factor 1, mitochondrial</fullName>
        <shortName>MRF-1</shortName>
        <shortName>MtRF-1</shortName>
    </recommendedName>
</protein>